<accession>Q5XJX1</accession>
<feature type="chain" id="PRO_0000330627" description="Secretagogin">
    <location>
        <begin position="1"/>
        <end position="272"/>
    </location>
</feature>
<feature type="domain" description="EF-hand 1" evidence="2">
    <location>
        <begin position="8"/>
        <end position="43"/>
    </location>
</feature>
<feature type="domain" description="EF-hand 2" evidence="2">
    <location>
        <begin position="53"/>
        <end position="89"/>
    </location>
</feature>
<feature type="domain" description="EF-hand 3" evidence="2">
    <location>
        <begin position="101"/>
        <end position="136"/>
    </location>
</feature>
<feature type="domain" description="EF-hand 4" evidence="2">
    <location>
        <begin position="145"/>
        <end position="180"/>
    </location>
</feature>
<feature type="domain" description="EF-hand 5" evidence="2">
    <location>
        <begin position="193"/>
        <end position="228"/>
    </location>
</feature>
<feature type="domain" description="EF-hand 6" evidence="2">
    <location>
        <begin position="237"/>
        <end position="272"/>
    </location>
</feature>
<feature type="binding site" evidence="2">
    <location>
        <position position="21"/>
    </location>
    <ligand>
        <name>Ca(2+)</name>
        <dbReference type="ChEBI" id="CHEBI:29108"/>
        <label>1</label>
    </ligand>
</feature>
<feature type="binding site" evidence="2">
    <location>
        <position position="23"/>
    </location>
    <ligand>
        <name>Ca(2+)</name>
        <dbReference type="ChEBI" id="CHEBI:29108"/>
        <label>1</label>
    </ligand>
</feature>
<feature type="binding site" evidence="2">
    <location>
        <position position="25"/>
    </location>
    <ligand>
        <name>Ca(2+)</name>
        <dbReference type="ChEBI" id="CHEBI:29108"/>
        <label>1</label>
    </ligand>
</feature>
<feature type="binding site" evidence="2">
    <location>
        <position position="27"/>
    </location>
    <ligand>
        <name>Ca(2+)</name>
        <dbReference type="ChEBI" id="CHEBI:29108"/>
        <label>1</label>
    </ligand>
</feature>
<feature type="binding site" evidence="2">
    <location>
        <position position="32"/>
    </location>
    <ligand>
        <name>Ca(2+)</name>
        <dbReference type="ChEBI" id="CHEBI:29108"/>
        <label>1</label>
    </ligand>
</feature>
<feature type="binding site" evidence="2">
    <location>
        <position position="114"/>
    </location>
    <ligand>
        <name>Ca(2+)</name>
        <dbReference type="ChEBI" id="CHEBI:29108"/>
        <label>2</label>
    </ligand>
</feature>
<feature type="binding site" evidence="2">
    <location>
        <position position="116"/>
    </location>
    <ligand>
        <name>Ca(2+)</name>
        <dbReference type="ChEBI" id="CHEBI:29108"/>
        <label>2</label>
    </ligand>
</feature>
<feature type="binding site" evidence="2">
    <location>
        <position position="118"/>
    </location>
    <ligand>
        <name>Ca(2+)</name>
        <dbReference type="ChEBI" id="CHEBI:29108"/>
        <label>2</label>
    </ligand>
</feature>
<feature type="binding site" evidence="2">
    <location>
        <position position="120"/>
    </location>
    <ligand>
        <name>Ca(2+)</name>
        <dbReference type="ChEBI" id="CHEBI:29108"/>
        <label>2</label>
    </ligand>
</feature>
<feature type="binding site" evidence="2">
    <location>
        <position position="125"/>
    </location>
    <ligand>
        <name>Ca(2+)</name>
        <dbReference type="ChEBI" id="CHEBI:29108"/>
        <label>2</label>
    </ligand>
</feature>
<feature type="binding site" evidence="2">
    <location>
        <position position="158"/>
    </location>
    <ligand>
        <name>Ca(2+)</name>
        <dbReference type="ChEBI" id="CHEBI:29108"/>
        <label>3</label>
    </ligand>
</feature>
<feature type="binding site" evidence="2">
    <location>
        <position position="160"/>
    </location>
    <ligand>
        <name>Ca(2+)</name>
        <dbReference type="ChEBI" id="CHEBI:29108"/>
        <label>3</label>
    </ligand>
</feature>
<feature type="binding site" evidence="2">
    <location>
        <position position="162"/>
    </location>
    <ligand>
        <name>Ca(2+)</name>
        <dbReference type="ChEBI" id="CHEBI:29108"/>
        <label>3</label>
    </ligand>
</feature>
<feature type="binding site" evidence="2">
    <location>
        <position position="164"/>
    </location>
    <ligand>
        <name>Ca(2+)</name>
        <dbReference type="ChEBI" id="CHEBI:29108"/>
        <label>3</label>
    </ligand>
</feature>
<feature type="binding site" evidence="2">
    <location>
        <position position="169"/>
    </location>
    <ligand>
        <name>Ca(2+)</name>
        <dbReference type="ChEBI" id="CHEBI:29108"/>
        <label>3</label>
    </ligand>
</feature>
<feature type="binding site" evidence="2">
    <location>
        <position position="206"/>
    </location>
    <ligand>
        <name>Ca(2+)</name>
        <dbReference type="ChEBI" id="CHEBI:29108"/>
        <label>4</label>
    </ligand>
</feature>
<feature type="binding site" evidence="2">
    <location>
        <position position="208"/>
    </location>
    <ligand>
        <name>Ca(2+)</name>
        <dbReference type="ChEBI" id="CHEBI:29108"/>
        <label>4</label>
    </ligand>
</feature>
<feature type="binding site" evidence="2">
    <location>
        <position position="210"/>
    </location>
    <ligand>
        <name>Ca(2+)</name>
        <dbReference type="ChEBI" id="CHEBI:29108"/>
        <label>4</label>
    </ligand>
</feature>
<feature type="binding site" evidence="2">
    <location>
        <position position="217"/>
    </location>
    <ligand>
        <name>Ca(2+)</name>
        <dbReference type="ChEBI" id="CHEBI:29108"/>
        <label>4</label>
    </ligand>
</feature>
<feature type="binding site" evidence="2">
    <location>
        <position position="250"/>
    </location>
    <ligand>
        <name>Ca(2+)</name>
        <dbReference type="ChEBI" id="CHEBI:29108"/>
        <label>5</label>
    </ligand>
</feature>
<feature type="binding site" evidence="2">
    <location>
        <position position="252"/>
    </location>
    <ligand>
        <name>Ca(2+)</name>
        <dbReference type="ChEBI" id="CHEBI:29108"/>
        <label>5</label>
    </ligand>
</feature>
<feature type="binding site" evidence="2">
    <location>
        <position position="254"/>
    </location>
    <ligand>
        <name>Ca(2+)</name>
        <dbReference type="ChEBI" id="CHEBI:29108"/>
        <label>5</label>
    </ligand>
</feature>
<feature type="binding site" evidence="2">
    <location>
        <position position="256"/>
    </location>
    <ligand>
        <name>Ca(2+)</name>
        <dbReference type="ChEBI" id="CHEBI:29108"/>
        <label>5</label>
    </ligand>
</feature>
<feature type="binding site" evidence="2">
    <location>
        <position position="261"/>
    </location>
    <ligand>
        <name>Ca(2+)</name>
        <dbReference type="ChEBI" id="CHEBI:29108"/>
        <label>5</label>
    </ligand>
</feature>
<feature type="helix" evidence="3">
    <location>
        <begin position="10"/>
        <end position="20"/>
    </location>
</feature>
<feature type="strand" evidence="3">
    <location>
        <begin position="26"/>
        <end position="29"/>
    </location>
</feature>
<feature type="helix" evidence="3">
    <location>
        <begin position="30"/>
        <end position="32"/>
    </location>
</feature>
<feature type="helix" evidence="3">
    <location>
        <begin position="33"/>
        <end position="44"/>
    </location>
</feature>
<feature type="helix" evidence="3">
    <location>
        <begin position="52"/>
        <end position="62"/>
    </location>
</feature>
<feature type="helix" evidence="3">
    <location>
        <begin position="65"/>
        <end position="68"/>
    </location>
</feature>
<feature type="strand" evidence="3">
    <location>
        <begin position="72"/>
        <end position="75"/>
    </location>
</feature>
<feature type="helix" evidence="3">
    <location>
        <begin position="76"/>
        <end position="83"/>
    </location>
</feature>
<feature type="helix" evidence="3">
    <location>
        <begin position="86"/>
        <end position="97"/>
    </location>
</feature>
<feature type="helix" evidence="3">
    <location>
        <begin position="103"/>
        <end position="113"/>
    </location>
</feature>
<feature type="strand" evidence="3">
    <location>
        <begin position="119"/>
        <end position="122"/>
    </location>
</feature>
<feature type="helix" evidence="3">
    <location>
        <begin position="123"/>
        <end position="125"/>
    </location>
</feature>
<feature type="helix" evidence="3">
    <location>
        <begin position="126"/>
        <end position="136"/>
    </location>
</feature>
<feature type="helix" evidence="3">
    <location>
        <begin position="143"/>
        <end position="157"/>
    </location>
</feature>
<feature type="strand" evidence="3">
    <location>
        <begin position="162"/>
        <end position="166"/>
    </location>
</feature>
<feature type="helix" evidence="3">
    <location>
        <begin position="167"/>
        <end position="170"/>
    </location>
</feature>
<feature type="helix" evidence="3">
    <location>
        <begin position="171"/>
        <end position="173"/>
    </location>
</feature>
<feature type="helix" evidence="5">
    <location>
        <begin position="180"/>
        <end position="183"/>
    </location>
</feature>
<feature type="helix" evidence="3">
    <location>
        <begin position="188"/>
        <end position="205"/>
    </location>
</feature>
<feature type="strand" evidence="3">
    <location>
        <begin position="211"/>
        <end position="214"/>
    </location>
</feature>
<feature type="helix" evidence="3">
    <location>
        <begin position="216"/>
        <end position="229"/>
    </location>
</feature>
<feature type="strand" evidence="3">
    <location>
        <begin position="230"/>
        <end position="232"/>
    </location>
</feature>
<feature type="helix" evidence="3">
    <location>
        <begin position="235"/>
        <end position="249"/>
    </location>
</feature>
<feature type="strand" evidence="4">
    <location>
        <begin position="251"/>
        <end position="253"/>
    </location>
</feature>
<feature type="strand" evidence="3">
    <location>
        <begin position="256"/>
        <end position="258"/>
    </location>
</feature>
<feature type="helix" evidence="3">
    <location>
        <begin position="259"/>
        <end position="265"/>
    </location>
</feature>
<keyword id="KW-0002">3D-structure</keyword>
<keyword id="KW-0106">Calcium</keyword>
<keyword id="KW-0963">Cytoplasm</keyword>
<keyword id="KW-0479">Metal-binding</keyword>
<keyword id="KW-1185">Reference proteome</keyword>
<keyword id="KW-0677">Repeat</keyword>
<protein>
    <recommendedName>
        <fullName>Secretagogin</fullName>
    </recommendedName>
</protein>
<sequence>MDSAFANLDAAGFLQIWQHFDADDNGYIEGKELDDFFRHMLKKLQPKDKITDERVQQIKKSFMSAYDATFDGRLQIEELANMILPQEENFLLIFRREAPLDNSVEFMKIWRKYDADSSGYISAAELKNFLKDLFLQHKKKIPPNKLDEYTDAMMKIFDKNKDGRLDLNDLARILALQENFLLQFKMDASSQVERKRDFEKIFAHYDVSRTGALEGPEVDGFVKDMMELVRPSISGGDLDKFRECLLTHCDMNKDGKIQKSELALCLGLKHKP</sequence>
<gene>
    <name type="primary">scgn</name>
    <name type="ORF">zgc:100843</name>
</gene>
<proteinExistence type="evidence at protein level"/>
<dbReference type="EMBL" id="BC083168">
    <property type="protein sequence ID" value="AAH83168.1"/>
    <property type="molecule type" value="mRNA"/>
</dbReference>
<dbReference type="RefSeq" id="NP_001005776.1">
    <property type="nucleotide sequence ID" value="NM_001005776.1"/>
</dbReference>
<dbReference type="PDB" id="2BE4">
    <property type="method" value="X-ray"/>
    <property type="resolution" value="2.10 A"/>
    <property type="chains" value="A=2-272"/>
</dbReference>
<dbReference type="PDB" id="2Q4U">
    <property type="method" value="X-ray"/>
    <property type="resolution" value="2.10 A"/>
    <property type="chains" value="A=2-272"/>
</dbReference>
<dbReference type="PDB" id="6JLH">
    <property type="method" value="X-ray"/>
    <property type="resolution" value="2.37 A"/>
    <property type="chains" value="A/C=7-267"/>
</dbReference>
<dbReference type="PDBsum" id="2BE4"/>
<dbReference type="PDBsum" id="2Q4U"/>
<dbReference type="PDBsum" id="6JLH"/>
<dbReference type="SMR" id="Q5XJX1"/>
<dbReference type="FunCoup" id="Q5XJX1">
    <property type="interactions" value="482"/>
</dbReference>
<dbReference type="STRING" id="7955.ENSDARP00000076090"/>
<dbReference type="PaxDb" id="7955-ENSDARP00000076090"/>
<dbReference type="Ensembl" id="ENSDART00000081649">
    <property type="protein sequence ID" value="ENSDARP00000076090"/>
    <property type="gene ID" value="ENSDARG00000058732"/>
</dbReference>
<dbReference type="Ensembl" id="ENSDART00000181959">
    <property type="protein sequence ID" value="ENSDARP00000155441"/>
    <property type="gene ID" value="ENSDARG00000115991"/>
</dbReference>
<dbReference type="GeneID" id="573010"/>
<dbReference type="KEGG" id="dre:573010"/>
<dbReference type="AGR" id="ZFIN:ZDB-GENE-041010-82"/>
<dbReference type="CTD" id="10590"/>
<dbReference type="ZFIN" id="ZDB-GENE-041010-82">
    <property type="gene designation" value="scgn"/>
</dbReference>
<dbReference type="eggNOG" id="KOG0027">
    <property type="taxonomic scope" value="Eukaryota"/>
</dbReference>
<dbReference type="HOGENOM" id="CLU_054826_1_1_1"/>
<dbReference type="InParanoid" id="Q5XJX1"/>
<dbReference type="OMA" id="QFMSAYD"/>
<dbReference type="OrthoDB" id="428774at2759"/>
<dbReference type="PhylomeDB" id="Q5XJX1"/>
<dbReference type="TreeFam" id="TF325083"/>
<dbReference type="EvolutionaryTrace" id="Q5XJX1"/>
<dbReference type="PRO" id="PR:Q5XJX1"/>
<dbReference type="Proteomes" id="UP000000437">
    <property type="component" value="Alternate scaffold 16"/>
</dbReference>
<dbReference type="Proteomes" id="UP000000437">
    <property type="component" value="Chromosome 16"/>
</dbReference>
<dbReference type="Bgee" id="ENSDARG00000058732">
    <property type="expression patterns" value="Expressed in head kidney and 16 other cell types or tissues"/>
</dbReference>
<dbReference type="GO" id="GO:0005829">
    <property type="term" value="C:cytosol"/>
    <property type="evidence" value="ECO:0000318"/>
    <property type="project" value="GO_Central"/>
</dbReference>
<dbReference type="GO" id="GO:0030425">
    <property type="term" value="C:dendrite"/>
    <property type="evidence" value="ECO:0000318"/>
    <property type="project" value="GO_Central"/>
</dbReference>
<dbReference type="GO" id="GO:0005634">
    <property type="term" value="C:nucleus"/>
    <property type="evidence" value="ECO:0000318"/>
    <property type="project" value="GO_Central"/>
</dbReference>
<dbReference type="GO" id="GO:0045202">
    <property type="term" value="C:synapse"/>
    <property type="evidence" value="ECO:0000318"/>
    <property type="project" value="GO_Central"/>
</dbReference>
<dbReference type="GO" id="GO:0043195">
    <property type="term" value="C:terminal bouton"/>
    <property type="evidence" value="ECO:0000318"/>
    <property type="project" value="GO_Central"/>
</dbReference>
<dbReference type="GO" id="GO:0005509">
    <property type="term" value="F:calcium ion binding"/>
    <property type="evidence" value="ECO:0000318"/>
    <property type="project" value="GO_Central"/>
</dbReference>
<dbReference type="GO" id="GO:0007420">
    <property type="term" value="P:brain development"/>
    <property type="evidence" value="ECO:0000315"/>
    <property type="project" value="ZFIN"/>
</dbReference>
<dbReference type="GO" id="GO:0021522">
    <property type="term" value="P:spinal cord motor neuron differentiation"/>
    <property type="evidence" value="ECO:0000315"/>
    <property type="project" value="ZFIN"/>
</dbReference>
<dbReference type="CDD" id="cd16178">
    <property type="entry name" value="EFh_HEF_SCGN"/>
    <property type="match status" value="1"/>
</dbReference>
<dbReference type="FunFam" id="1.10.238.10:FF:000142">
    <property type="entry name" value="Secretagogin"/>
    <property type="match status" value="1"/>
</dbReference>
<dbReference type="FunFam" id="1.10.238.10:FF:000186">
    <property type="entry name" value="Secretagogin"/>
    <property type="match status" value="1"/>
</dbReference>
<dbReference type="Gene3D" id="1.10.238.10">
    <property type="entry name" value="EF-hand"/>
    <property type="match status" value="3"/>
</dbReference>
<dbReference type="InterPro" id="IPR051001">
    <property type="entry name" value="Calbindin_Ca-bind"/>
</dbReference>
<dbReference type="InterPro" id="IPR011992">
    <property type="entry name" value="EF-hand-dom_pair"/>
</dbReference>
<dbReference type="InterPro" id="IPR018247">
    <property type="entry name" value="EF_Hand_1_Ca_BS"/>
</dbReference>
<dbReference type="InterPro" id="IPR002048">
    <property type="entry name" value="EF_hand_dom"/>
</dbReference>
<dbReference type="InterPro" id="IPR035798">
    <property type="entry name" value="EFh_SCGN"/>
</dbReference>
<dbReference type="PANTHER" id="PTHR19972">
    <property type="entry name" value="CALBINDIN"/>
    <property type="match status" value="1"/>
</dbReference>
<dbReference type="PANTHER" id="PTHR19972:SF15">
    <property type="entry name" value="SECRETAGOGIN"/>
    <property type="match status" value="1"/>
</dbReference>
<dbReference type="Pfam" id="PF13202">
    <property type="entry name" value="EF-hand_5"/>
    <property type="match status" value="1"/>
</dbReference>
<dbReference type="Pfam" id="PF13499">
    <property type="entry name" value="EF-hand_7"/>
    <property type="match status" value="2"/>
</dbReference>
<dbReference type="SMART" id="SM00054">
    <property type="entry name" value="EFh"/>
    <property type="match status" value="5"/>
</dbReference>
<dbReference type="SUPFAM" id="SSF47473">
    <property type="entry name" value="EF-hand"/>
    <property type="match status" value="2"/>
</dbReference>
<dbReference type="PROSITE" id="PS00018">
    <property type="entry name" value="EF_HAND_1"/>
    <property type="match status" value="5"/>
</dbReference>
<dbReference type="PROSITE" id="PS50222">
    <property type="entry name" value="EF_HAND_2"/>
    <property type="match status" value="6"/>
</dbReference>
<evidence type="ECO:0000250" key="1"/>
<evidence type="ECO:0000255" key="2">
    <source>
        <dbReference type="PROSITE-ProRule" id="PRU00448"/>
    </source>
</evidence>
<evidence type="ECO:0007829" key="3">
    <source>
        <dbReference type="PDB" id="2BE4"/>
    </source>
</evidence>
<evidence type="ECO:0007829" key="4">
    <source>
        <dbReference type="PDB" id="2Q4U"/>
    </source>
</evidence>
<evidence type="ECO:0007829" key="5">
    <source>
        <dbReference type="PDB" id="6JLH"/>
    </source>
</evidence>
<organism>
    <name type="scientific">Danio rerio</name>
    <name type="common">Zebrafish</name>
    <name type="synonym">Brachydanio rerio</name>
    <dbReference type="NCBI Taxonomy" id="7955"/>
    <lineage>
        <taxon>Eukaryota</taxon>
        <taxon>Metazoa</taxon>
        <taxon>Chordata</taxon>
        <taxon>Craniata</taxon>
        <taxon>Vertebrata</taxon>
        <taxon>Euteleostomi</taxon>
        <taxon>Actinopterygii</taxon>
        <taxon>Neopterygii</taxon>
        <taxon>Teleostei</taxon>
        <taxon>Ostariophysi</taxon>
        <taxon>Cypriniformes</taxon>
        <taxon>Danionidae</taxon>
        <taxon>Danioninae</taxon>
        <taxon>Danio</taxon>
    </lineage>
</organism>
<reference key="1">
    <citation type="submission" date="2004-09" db="EMBL/GenBank/DDBJ databases">
        <authorList>
            <consortium name="NIH - Zebrafish Gene Collection (ZGC) project"/>
        </authorList>
    </citation>
    <scope>NUCLEOTIDE SEQUENCE [LARGE SCALE MRNA]</scope>
    <source>
        <tissue>Embryo</tissue>
    </source>
</reference>
<reference key="2">
    <citation type="submission" date="2005-11" db="PDB data bank">
        <title>X-ray structure of an EF-hand protein from Danio rerio DR.36843.</title>
        <authorList>
            <consortium name="Center for eukaryotic structural genomics (CESG)"/>
        </authorList>
    </citation>
    <scope>X-RAY CRYSTALLOGRAPHY (2.1 ANGSTROMS)</scope>
</reference>
<comment type="subcellular location">
    <subcellularLocation>
        <location evidence="1">Cytoplasm</location>
    </subcellularLocation>
</comment>
<name>SEGN_DANRE</name>